<sequence length="375" mass="40265">MTQPAILVLEDGTVFEGESVGANGLSVGEVVFNTAMTGYQEVLTDPSYARQMVTLTYPHIGNTGFNDQDDEAKQVWAAGLIVRDVPRRPSSWRNQVALPAWLQTRGVVAISGIDTRKLTRLLREKGAQNGALMAGEIDVEKALEAARKFPGLKGMDLAKVVSTETTYQWQEGQLDLNANAFVQAELKFKVVAYDYGVKINILRMLAERGCDVTVVPARTPVAEVLAMQPDGVFLSNGPGDPEPCDYAISAIQELIAKKVPTFGICLGHQLLALAAGAKTVKMATGHHGANHPVQDLDGGRVMITSQNHGFAVDETTLPANVRVTHRSLFDGTNQGIALTDAPAFSFQGHPEASPGPRDVGPLFDRFVASMAEAKS</sequence>
<name>CARA_XANCP</name>
<dbReference type="EC" id="6.3.5.5" evidence="1"/>
<dbReference type="EMBL" id="AE008922">
    <property type="protein sequence ID" value="AAM41130.1"/>
    <property type="molecule type" value="Genomic_DNA"/>
</dbReference>
<dbReference type="RefSeq" id="NP_637206.1">
    <property type="nucleotide sequence ID" value="NC_003902.1"/>
</dbReference>
<dbReference type="RefSeq" id="WP_011037011.1">
    <property type="nucleotide sequence ID" value="NC_003902.1"/>
</dbReference>
<dbReference type="SMR" id="P58896"/>
<dbReference type="STRING" id="190485.XCC1841"/>
<dbReference type="MEROPS" id="C26.954"/>
<dbReference type="EnsemblBacteria" id="AAM41130">
    <property type="protein sequence ID" value="AAM41130"/>
    <property type="gene ID" value="XCC1841"/>
</dbReference>
<dbReference type="KEGG" id="xcc:XCC1841"/>
<dbReference type="PATRIC" id="fig|190485.4.peg.1965"/>
<dbReference type="eggNOG" id="COG0505">
    <property type="taxonomic scope" value="Bacteria"/>
</dbReference>
<dbReference type="HOGENOM" id="CLU_035901_2_1_6"/>
<dbReference type="OrthoDB" id="9804328at2"/>
<dbReference type="UniPathway" id="UPA00068">
    <property type="reaction ID" value="UER00171"/>
</dbReference>
<dbReference type="UniPathway" id="UPA00070">
    <property type="reaction ID" value="UER00115"/>
</dbReference>
<dbReference type="Proteomes" id="UP000001010">
    <property type="component" value="Chromosome"/>
</dbReference>
<dbReference type="GO" id="GO:0005951">
    <property type="term" value="C:carbamoyl-phosphate synthase complex"/>
    <property type="evidence" value="ECO:0000318"/>
    <property type="project" value="GO_Central"/>
</dbReference>
<dbReference type="GO" id="GO:0005737">
    <property type="term" value="C:cytoplasm"/>
    <property type="evidence" value="ECO:0000318"/>
    <property type="project" value="GO_Central"/>
</dbReference>
<dbReference type="GO" id="GO:0005524">
    <property type="term" value="F:ATP binding"/>
    <property type="evidence" value="ECO:0007669"/>
    <property type="project" value="UniProtKB-UniRule"/>
</dbReference>
<dbReference type="GO" id="GO:0004088">
    <property type="term" value="F:carbamoyl-phosphate synthase (glutamine-hydrolyzing) activity"/>
    <property type="evidence" value="ECO:0007669"/>
    <property type="project" value="UniProtKB-UniRule"/>
</dbReference>
<dbReference type="GO" id="GO:0004359">
    <property type="term" value="F:glutaminase activity"/>
    <property type="evidence" value="ECO:0007669"/>
    <property type="project" value="RHEA"/>
</dbReference>
<dbReference type="GO" id="GO:0006207">
    <property type="term" value="P:'de novo' pyrimidine nucleobase biosynthetic process"/>
    <property type="evidence" value="ECO:0007669"/>
    <property type="project" value="InterPro"/>
</dbReference>
<dbReference type="GO" id="GO:0044205">
    <property type="term" value="P:'de novo' UMP biosynthetic process"/>
    <property type="evidence" value="ECO:0007669"/>
    <property type="project" value="UniProtKB-UniRule"/>
</dbReference>
<dbReference type="GO" id="GO:0006541">
    <property type="term" value="P:glutamine metabolic process"/>
    <property type="evidence" value="ECO:0007669"/>
    <property type="project" value="InterPro"/>
</dbReference>
<dbReference type="GO" id="GO:0006526">
    <property type="term" value="P:L-arginine biosynthetic process"/>
    <property type="evidence" value="ECO:0000318"/>
    <property type="project" value="GO_Central"/>
</dbReference>
<dbReference type="CDD" id="cd01744">
    <property type="entry name" value="GATase1_CPSase"/>
    <property type="match status" value="1"/>
</dbReference>
<dbReference type="FunFam" id="3.40.50.880:FF:000011">
    <property type="entry name" value="Carbamoyl-phosphate synthase small chain"/>
    <property type="match status" value="1"/>
</dbReference>
<dbReference type="FunFam" id="3.50.30.20:FF:000001">
    <property type="entry name" value="Carbamoyl-phosphate synthase small chain"/>
    <property type="match status" value="1"/>
</dbReference>
<dbReference type="Gene3D" id="3.40.50.880">
    <property type="match status" value="1"/>
</dbReference>
<dbReference type="Gene3D" id="3.50.30.20">
    <property type="entry name" value="Carbamoyl-phosphate synthase small subunit, N-terminal domain"/>
    <property type="match status" value="1"/>
</dbReference>
<dbReference type="HAMAP" id="MF_01209">
    <property type="entry name" value="CPSase_S_chain"/>
    <property type="match status" value="1"/>
</dbReference>
<dbReference type="InterPro" id="IPR050472">
    <property type="entry name" value="Anth_synth/Amidotransfase"/>
</dbReference>
<dbReference type="InterPro" id="IPR006274">
    <property type="entry name" value="CarbamoylP_synth_ssu"/>
</dbReference>
<dbReference type="InterPro" id="IPR002474">
    <property type="entry name" value="CarbamoylP_synth_ssu_N"/>
</dbReference>
<dbReference type="InterPro" id="IPR036480">
    <property type="entry name" value="CarbP_synth_ssu_N_sf"/>
</dbReference>
<dbReference type="InterPro" id="IPR029062">
    <property type="entry name" value="Class_I_gatase-like"/>
</dbReference>
<dbReference type="InterPro" id="IPR035686">
    <property type="entry name" value="CPSase_GATase1"/>
</dbReference>
<dbReference type="InterPro" id="IPR017926">
    <property type="entry name" value="GATASE"/>
</dbReference>
<dbReference type="NCBIfam" id="TIGR01368">
    <property type="entry name" value="CPSaseIIsmall"/>
    <property type="match status" value="1"/>
</dbReference>
<dbReference type="NCBIfam" id="NF009475">
    <property type="entry name" value="PRK12838.1"/>
    <property type="match status" value="1"/>
</dbReference>
<dbReference type="PANTHER" id="PTHR43418:SF7">
    <property type="entry name" value="CARBAMOYL-PHOSPHATE SYNTHASE SMALL CHAIN"/>
    <property type="match status" value="1"/>
</dbReference>
<dbReference type="PANTHER" id="PTHR43418">
    <property type="entry name" value="MULTIFUNCTIONAL TRYPTOPHAN BIOSYNTHESIS PROTEIN-RELATED"/>
    <property type="match status" value="1"/>
</dbReference>
<dbReference type="Pfam" id="PF00988">
    <property type="entry name" value="CPSase_sm_chain"/>
    <property type="match status" value="1"/>
</dbReference>
<dbReference type="Pfam" id="PF00117">
    <property type="entry name" value="GATase"/>
    <property type="match status" value="1"/>
</dbReference>
<dbReference type="PRINTS" id="PR00099">
    <property type="entry name" value="CPSGATASE"/>
</dbReference>
<dbReference type="PRINTS" id="PR00096">
    <property type="entry name" value="GATASE"/>
</dbReference>
<dbReference type="SMART" id="SM01097">
    <property type="entry name" value="CPSase_sm_chain"/>
    <property type="match status" value="1"/>
</dbReference>
<dbReference type="SUPFAM" id="SSF52021">
    <property type="entry name" value="Carbamoyl phosphate synthetase, small subunit N-terminal domain"/>
    <property type="match status" value="1"/>
</dbReference>
<dbReference type="SUPFAM" id="SSF52317">
    <property type="entry name" value="Class I glutamine amidotransferase-like"/>
    <property type="match status" value="1"/>
</dbReference>
<dbReference type="PROSITE" id="PS51273">
    <property type="entry name" value="GATASE_TYPE_1"/>
    <property type="match status" value="1"/>
</dbReference>
<protein>
    <recommendedName>
        <fullName evidence="1">Carbamoyl phosphate synthase small chain</fullName>
        <ecNumber evidence="1">6.3.5.5</ecNumber>
    </recommendedName>
    <alternativeName>
        <fullName evidence="1">Carbamoyl phosphate synthetase glutamine chain</fullName>
    </alternativeName>
</protein>
<proteinExistence type="inferred from homology"/>
<evidence type="ECO:0000255" key="1">
    <source>
        <dbReference type="HAMAP-Rule" id="MF_01209"/>
    </source>
</evidence>
<reference key="1">
    <citation type="journal article" date="2002" name="Nature">
        <title>Comparison of the genomes of two Xanthomonas pathogens with differing host specificities.</title>
        <authorList>
            <person name="da Silva A.C.R."/>
            <person name="Ferro J.A."/>
            <person name="Reinach F.C."/>
            <person name="Farah C.S."/>
            <person name="Furlan L.R."/>
            <person name="Quaggio R.B."/>
            <person name="Monteiro-Vitorello C.B."/>
            <person name="Van Sluys M.A."/>
            <person name="Almeida N.F. Jr."/>
            <person name="Alves L.M.C."/>
            <person name="do Amaral A.M."/>
            <person name="Bertolini M.C."/>
            <person name="Camargo L.E.A."/>
            <person name="Camarotte G."/>
            <person name="Cannavan F."/>
            <person name="Cardozo J."/>
            <person name="Chambergo F."/>
            <person name="Ciapina L.P."/>
            <person name="Cicarelli R.M.B."/>
            <person name="Coutinho L.L."/>
            <person name="Cursino-Santos J.R."/>
            <person name="El-Dorry H."/>
            <person name="Faria J.B."/>
            <person name="Ferreira A.J.S."/>
            <person name="Ferreira R.C.C."/>
            <person name="Ferro M.I.T."/>
            <person name="Formighieri E.F."/>
            <person name="Franco M.C."/>
            <person name="Greggio C.C."/>
            <person name="Gruber A."/>
            <person name="Katsuyama A.M."/>
            <person name="Kishi L.T."/>
            <person name="Leite R.P."/>
            <person name="Lemos E.G.M."/>
            <person name="Lemos M.V.F."/>
            <person name="Locali E.C."/>
            <person name="Machado M.A."/>
            <person name="Madeira A.M.B.N."/>
            <person name="Martinez-Rossi N.M."/>
            <person name="Martins E.C."/>
            <person name="Meidanis J."/>
            <person name="Menck C.F.M."/>
            <person name="Miyaki C.Y."/>
            <person name="Moon D.H."/>
            <person name="Moreira L.M."/>
            <person name="Novo M.T.M."/>
            <person name="Okura V.K."/>
            <person name="Oliveira M.C."/>
            <person name="Oliveira V.R."/>
            <person name="Pereira H.A."/>
            <person name="Rossi A."/>
            <person name="Sena J.A.D."/>
            <person name="Silva C."/>
            <person name="de Souza R.F."/>
            <person name="Spinola L.A.F."/>
            <person name="Takita M.A."/>
            <person name="Tamura R.E."/>
            <person name="Teixeira E.C."/>
            <person name="Tezza R.I.D."/>
            <person name="Trindade dos Santos M."/>
            <person name="Truffi D."/>
            <person name="Tsai S.M."/>
            <person name="White F.F."/>
            <person name="Setubal J.C."/>
            <person name="Kitajima J.P."/>
        </authorList>
    </citation>
    <scope>NUCLEOTIDE SEQUENCE [LARGE SCALE GENOMIC DNA]</scope>
    <source>
        <strain>ATCC 33913 / DSM 3586 / NCPPB 528 / LMG 568 / P 25</strain>
    </source>
</reference>
<accession>P58896</accession>
<gene>
    <name evidence="1" type="primary">carA</name>
    <name type="ordered locus">XCC1841</name>
</gene>
<comment type="function">
    <text evidence="1">Small subunit of the glutamine-dependent carbamoyl phosphate synthetase (CPSase). CPSase catalyzes the formation of carbamoyl phosphate from the ammonia moiety of glutamine, carbonate, and phosphate donated by ATP, constituting the first step of 2 biosynthetic pathways, one leading to arginine and/or urea and the other to pyrimidine nucleotides. The small subunit (glutamine amidotransferase) binds and cleaves glutamine to supply the large subunit with the substrate ammonia.</text>
</comment>
<comment type="catalytic activity">
    <reaction evidence="1">
        <text>hydrogencarbonate + L-glutamine + 2 ATP + H2O = carbamoyl phosphate + L-glutamate + 2 ADP + phosphate + 2 H(+)</text>
        <dbReference type="Rhea" id="RHEA:18633"/>
        <dbReference type="ChEBI" id="CHEBI:15377"/>
        <dbReference type="ChEBI" id="CHEBI:15378"/>
        <dbReference type="ChEBI" id="CHEBI:17544"/>
        <dbReference type="ChEBI" id="CHEBI:29985"/>
        <dbReference type="ChEBI" id="CHEBI:30616"/>
        <dbReference type="ChEBI" id="CHEBI:43474"/>
        <dbReference type="ChEBI" id="CHEBI:58228"/>
        <dbReference type="ChEBI" id="CHEBI:58359"/>
        <dbReference type="ChEBI" id="CHEBI:456216"/>
        <dbReference type="EC" id="6.3.5.5"/>
    </reaction>
</comment>
<comment type="catalytic activity">
    <molecule>Carbamoyl phosphate synthase small chain</molecule>
    <reaction evidence="1">
        <text>L-glutamine + H2O = L-glutamate + NH4(+)</text>
        <dbReference type="Rhea" id="RHEA:15889"/>
        <dbReference type="ChEBI" id="CHEBI:15377"/>
        <dbReference type="ChEBI" id="CHEBI:28938"/>
        <dbReference type="ChEBI" id="CHEBI:29985"/>
        <dbReference type="ChEBI" id="CHEBI:58359"/>
    </reaction>
</comment>
<comment type="pathway">
    <text evidence="1">Amino-acid biosynthesis; L-arginine biosynthesis; carbamoyl phosphate from bicarbonate: step 1/1.</text>
</comment>
<comment type="pathway">
    <text evidence="1">Pyrimidine metabolism; UMP biosynthesis via de novo pathway; (S)-dihydroorotate from bicarbonate: step 1/3.</text>
</comment>
<comment type="subunit">
    <text evidence="1">Composed of two chains; the small (or glutamine) chain promotes the hydrolysis of glutamine to ammonia, which is used by the large (or ammonia) chain to synthesize carbamoyl phosphate. Tetramer of heterodimers (alpha,beta)4.</text>
</comment>
<comment type="similarity">
    <text evidence="1">Belongs to the CarA family.</text>
</comment>
<keyword id="KW-0028">Amino-acid biosynthesis</keyword>
<keyword id="KW-0055">Arginine biosynthesis</keyword>
<keyword id="KW-0067">ATP-binding</keyword>
<keyword id="KW-0315">Glutamine amidotransferase</keyword>
<keyword id="KW-0436">Ligase</keyword>
<keyword id="KW-0547">Nucleotide-binding</keyword>
<keyword id="KW-0665">Pyrimidine biosynthesis</keyword>
<keyword id="KW-1185">Reference proteome</keyword>
<organism>
    <name type="scientific">Xanthomonas campestris pv. campestris (strain ATCC 33913 / DSM 3586 / NCPPB 528 / LMG 568 / P 25)</name>
    <dbReference type="NCBI Taxonomy" id="190485"/>
    <lineage>
        <taxon>Bacteria</taxon>
        <taxon>Pseudomonadati</taxon>
        <taxon>Pseudomonadota</taxon>
        <taxon>Gammaproteobacteria</taxon>
        <taxon>Lysobacterales</taxon>
        <taxon>Lysobacteraceae</taxon>
        <taxon>Xanthomonas</taxon>
    </lineage>
</organism>
<feature type="chain" id="PRO_0000112349" description="Carbamoyl phosphate synthase small chain">
    <location>
        <begin position="1"/>
        <end position="375"/>
    </location>
</feature>
<feature type="domain" description="Glutamine amidotransferase type-1" evidence="1">
    <location>
        <begin position="189"/>
        <end position="375"/>
    </location>
</feature>
<feature type="region of interest" description="CPSase" evidence="1">
    <location>
        <begin position="1"/>
        <end position="185"/>
    </location>
</feature>
<feature type="active site" description="Nucleophile" evidence="1">
    <location>
        <position position="265"/>
    </location>
</feature>
<feature type="active site" evidence="1">
    <location>
        <position position="349"/>
    </location>
</feature>
<feature type="active site" evidence="1">
    <location>
        <position position="351"/>
    </location>
</feature>
<feature type="binding site" evidence="1">
    <location>
        <position position="47"/>
    </location>
    <ligand>
        <name>L-glutamine</name>
        <dbReference type="ChEBI" id="CHEBI:58359"/>
    </ligand>
</feature>
<feature type="binding site" evidence="1">
    <location>
        <position position="237"/>
    </location>
    <ligand>
        <name>L-glutamine</name>
        <dbReference type="ChEBI" id="CHEBI:58359"/>
    </ligand>
</feature>
<feature type="binding site" evidence="1">
    <location>
        <position position="239"/>
    </location>
    <ligand>
        <name>L-glutamine</name>
        <dbReference type="ChEBI" id="CHEBI:58359"/>
    </ligand>
</feature>
<feature type="binding site" evidence="1">
    <location>
        <position position="266"/>
    </location>
    <ligand>
        <name>L-glutamine</name>
        <dbReference type="ChEBI" id="CHEBI:58359"/>
    </ligand>
</feature>
<feature type="binding site" evidence="1">
    <location>
        <position position="269"/>
    </location>
    <ligand>
        <name>L-glutamine</name>
        <dbReference type="ChEBI" id="CHEBI:58359"/>
    </ligand>
</feature>
<feature type="binding site" evidence="1">
    <location>
        <position position="307"/>
    </location>
    <ligand>
        <name>L-glutamine</name>
        <dbReference type="ChEBI" id="CHEBI:58359"/>
    </ligand>
</feature>
<feature type="binding site" evidence="1">
    <location>
        <position position="309"/>
    </location>
    <ligand>
        <name>L-glutamine</name>
        <dbReference type="ChEBI" id="CHEBI:58359"/>
    </ligand>
</feature>
<feature type="binding site" evidence="1">
    <location>
        <position position="310"/>
    </location>
    <ligand>
        <name>L-glutamine</name>
        <dbReference type="ChEBI" id="CHEBI:58359"/>
    </ligand>
</feature>